<feature type="chain" id="PRO_1000062391" description="NADPH-dependent 7-cyano-7-deazaguanine reductase">
    <location>
        <begin position="1"/>
        <end position="133"/>
    </location>
</feature>
<feature type="active site" description="Thioimide intermediate" evidence="1">
    <location>
        <position position="49"/>
    </location>
</feature>
<feature type="active site" description="Proton donor" evidence="1">
    <location>
        <position position="56"/>
    </location>
</feature>
<feature type="binding site" evidence="1">
    <location>
        <begin position="71"/>
        <end position="73"/>
    </location>
    <ligand>
        <name>substrate</name>
    </ligand>
</feature>
<feature type="binding site" evidence="1">
    <location>
        <begin position="90"/>
        <end position="91"/>
    </location>
    <ligand>
        <name>substrate</name>
    </ligand>
</feature>
<reference key="1">
    <citation type="journal article" date="2006" name="Proc. Natl. Acad. Sci. U.S.A.">
        <title>Genome reduction in Leptospira borgpetersenii reflects limited transmission potential.</title>
        <authorList>
            <person name="Bulach D.M."/>
            <person name="Zuerner R.L."/>
            <person name="Wilson P."/>
            <person name="Seemann T."/>
            <person name="McGrath A."/>
            <person name="Cullen P.A."/>
            <person name="Davis J."/>
            <person name="Johnson M."/>
            <person name="Kuczek E."/>
            <person name="Alt D.P."/>
            <person name="Peterson-Burch B."/>
            <person name="Coppel R.L."/>
            <person name="Rood J.I."/>
            <person name="Davies J.K."/>
            <person name="Adler B."/>
        </authorList>
    </citation>
    <scope>NUCLEOTIDE SEQUENCE [LARGE SCALE GENOMIC DNA]</scope>
    <source>
        <strain>L550</strain>
    </source>
</reference>
<protein>
    <recommendedName>
        <fullName evidence="1">NADPH-dependent 7-cyano-7-deazaguanine reductase</fullName>
        <ecNumber evidence="1">1.7.1.13</ecNumber>
    </recommendedName>
    <alternativeName>
        <fullName evidence="1">7-cyano-7-carbaguanine reductase</fullName>
    </alternativeName>
    <alternativeName>
        <fullName evidence="1">NADPH-dependent nitrile oxidoreductase</fullName>
    </alternativeName>
    <alternativeName>
        <fullName evidence="1">PreQ(0) reductase</fullName>
    </alternativeName>
</protein>
<accession>Q051Z3</accession>
<sequence>MKTNHPETYDGRQDHIPSLKTPEIESFTNVYEGKDYTIDFTVPEFTAVCPKTGLPDFGVIYVSYVPTKRCIELKSFKEYILSYRNVGVFHEFLVNKIMEDLIAAIDPKYLKVIGDYNARGGIKTVVTREYNKI</sequence>
<evidence type="ECO:0000255" key="1">
    <source>
        <dbReference type="HAMAP-Rule" id="MF_00818"/>
    </source>
</evidence>
<comment type="function">
    <text evidence="1">Catalyzes the NADPH-dependent reduction of 7-cyano-7-deazaguanine (preQ0) to 7-aminomethyl-7-deazaguanine (preQ1).</text>
</comment>
<comment type="catalytic activity">
    <reaction evidence="1">
        <text>7-aminomethyl-7-carbaguanine + 2 NADP(+) = 7-cyano-7-deazaguanine + 2 NADPH + 3 H(+)</text>
        <dbReference type="Rhea" id="RHEA:13409"/>
        <dbReference type="ChEBI" id="CHEBI:15378"/>
        <dbReference type="ChEBI" id="CHEBI:45075"/>
        <dbReference type="ChEBI" id="CHEBI:57783"/>
        <dbReference type="ChEBI" id="CHEBI:58349"/>
        <dbReference type="ChEBI" id="CHEBI:58703"/>
        <dbReference type="EC" id="1.7.1.13"/>
    </reaction>
</comment>
<comment type="pathway">
    <text evidence="1">tRNA modification; tRNA-queuosine biosynthesis.</text>
</comment>
<comment type="subcellular location">
    <subcellularLocation>
        <location evidence="1">Cytoplasm</location>
    </subcellularLocation>
</comment>
<comment type="similarity">
    <text evidence="1">Belongs to the GTP cyclohydrolase I family. QueF type 1 subfamily.</text>
</comment>
<dbReference type="EC" id="1.7.1.13" evidence="1"/>
<dbReference type="EMBL" id="CP000348">
    <property type="protein sequence ID" value="ABJ78852.1"/>
    <property type="molecule type" value="Genomic_DNA"/>
</dbReference>
<dbReference type="RefSeq" id="WP_002751062.1">
    <property type="nucleotide sequence ID" value="NC_008508.1"/>
</dbReference>
<dbReference type="SMR" id="Q051Z3"/>
<dbReference type="KEGG" id="lbl:LBL_1360"/>
<dbReference type="HOGENOM" id="CLU_102489_1_0_12"/>
<dbReference type="UniPathway" id="UPA00392"/>
<dbReference type="GO" id="GO:0005737">
    <property type="term" value="C:cytoplasm"/>
    <property type="evidence" value="ECO:0007669"/>
    <property type="project" value="UniProtKB-SubCell"/>
</dbReference>
<dbReference type="GO" id="GO:0033739">
    <property type="term" value="F:preQ1 synthase activity"/>
    <property type="evidence" value="ECO:0007669"/>
    <property type="project" value="UniProtKB-UniRule"/>
</dbReference>
<dbReference type="GO" id="GO:0008616">
    <property type="term" value="P:queuosine biosynthetic process"/>
    <property type="evidence" value="ECO:0007669"/>
    <property type="project" value="UniProtKB-UniRule"/>
</dbReference>
<dbReference type="GO" id="GO:0006400">
    <property type="term" value="P:tRNA modification"/>
    <property type="evidence" value="ECO:0007669"/>
    <property type="project" value="UniProtKB-UniRule"/>
</dbReference>
<dbReference type="Gene3D" id="3.30.1130.10">
    <property type="match status" value="1"/>
</dbReference>
<dbReference type="HAMAP" id="MF_00818">
    <property type="entry name" value="QueF_type1"/>
    <property type="match status" value="1"/>
</dbReference>
<dbReference type="InterPro" id="IPR043133">
    <property type="entry name" value="GTP-CH-I_C/QueF"/>
</dbReference>
<dbReference type="InterPro" id="IPR050084">
    <property type="entry name" value="NADPH_dep_7-cyano-7-deazaG_red"/>
</dbReference>
<dbReference type="InterPro" id="IPR029500">
    <property type="entry name" value="QueF"/>
</dbReference>
<dbReference type="InterPro" id="IPR016856">
    <property type="entry name" value="QueF_type1"/>
</dbReference>
<dbReference type="NCBIfam" id="TIGR03139">
    <property type="entry name" value="QueF-II"/>
    <property type="match status" value="1"/>
</dbReference>
<dbReference type="PANTHER" id="PTHR34354">
    <property type="entry name" value="NADPH-DEPENDENT 7-CYANO-7-DEAZAGUANINE REDUCTASE"/>
    <property type="match status" value="1"/>
</dbReference>
<dbReference type="PANTHER" id="PTHR34354:SF1">
    <property type="entry name" value="NADPH-DEPENDENT 7-CYANO-7-DEAZAGUANINE REDUCTASE"/>
    <property type="match status" value="1"/>
</dbReference>
<dbReference type="Pfam" id="PF14489">
    <property type="entry name" value="QueF"/>
    <property type="match status" value="1"/>
</dbReference>
<dbReference type="PIRSF" id="PIRSF027377">
    <property type="entry name" value="Nitrile_oxidored_QueF"/>
    <property type="match status" value="1"/>
</dbReference>
<dbReference type="SUPFAM" id="SSF55620">
    <property type="entry name" value="Tetrahydrobiopterin biosynthesis enzymes-like"/>
    <property type="match status" value="1"/>
</dbReference>
<organism>
    <name type="scientific">Leptospira borgpetersenii serovar Hardjo-bovis (strain L550)</name>
    <dbReference type="NCBI Taxonomy" id="355276"/>
    <lineage>
        <taxon>Bacteria</taxon>
        <taxon>Pseudomonadati</taxon>
        <taxon>Spirochaetota</taxon>
        <taxon>Spirochaetia</taxon>
        <taxon>Leptospirales</taxon>
        <taxon>Leptospiraceae</taxon>
        <taxon>Leptospira</taxon>
    </lineage>
</organism>
<name>QUEF_LEPBL</name>
<proteinExistence type="inferred from homology"/>
<keyword id="KW-0963">Cytoplasm</keyword>
<keyword id="KW-0521">NADP</keyword>
<keyword id="KW-0560">Oxidoreductase</keyword>
<keyword id="KW-0671">Queuosine biosynthesis</keyword>
<gene>
    <name evidence="1" type="primary">queF</name>
    <name type="ordered locus">LBL_1360</name>
</gene>